<name>SECA2_MYCBP</name>
<feature type="chain" id="PRO_0000318379" description="Protein translocase subunit SecA 2">
    <location>
        <begin position="1"/>
        <end position="808"/>
    </location>
</feature>
<feature type="binding site" evidence="1">
    <location>
        <position position="124"/>
    </location>
    <ligand>
        <name>ATP</name>
        <dbReference type="ChEBI" id="CHEBI:30616"/>
    </ligand>
</feature>
<feature type="binding site" evidence="1">
    <location>
        <begin position="142"/>
        <end position="146"/>
    </location>
    <ligand>
        <name>ATP</name>
        <dbReference type="ChEBI" id="CHEBI:30616"/>
    </ligand>
</feature>
<feature type="binding site" evidence="1">
    <location>
        <position position="535"/>
    </location>
    <ligand>
        <name>ATP</name>
        <dbReference type="ChEBI" id="CHEBI:30616"/>
    </ligand>
</feature>
<comment type="function">
    <text evidence="1">Part of the Sec protein translocase complex. Interacts with the SecYEG preprotein conducting channel. Has a central role in coupling the hydrolysis of ATP to the transfer of proteins into and across the cell membrane, serving as an ATP-driven molecular motor driving the stepwise translocation of polypeptide chains across the membrane.</text>
</comment>
<comment type="catalytic activity">
    <reaction evidence="1">
        <text>ATP + H2O + cellular proteinSide 1 = ADP + phosphate + cellular proteinSide 2.</text>
        <dbReference type="EC" id="7.4.2.8"/>
    </reaction>
</comment>
<comment type="subunit">
    <text evidence="1">Monomer and homodimer. Part of the essential Sec protein translocation apparatus which comprises SecA, SecYEG and auxiliary proteins SecDF. Other proteins may also be involved.</text>
</comment>
<comment type="subcellular location">
    <subcellularLocation>
        <location evidence="1">Cell membrane</location>
        <topology evidence="1">Peripheral membrane protein</topology>
        <orientation evidence="1">Cytoplasmic side</orientation>
    </subcellularLocation>
    <subcellularLocation>
        <location evidence="1">Cytoplasm</location>
    </subcellularLocation>
    <text evidence="1">Distribution is 50-50.</text>
</comment>
<comment type="similarity">
    <text evidence="1">Belongs to the SecA family.</text>
</comment>
<keyword id="KW-0067">ATP-binding</keyword>
<keyword id="KW-1003">Cell membrane</keyword>
<keyword id="KW-0963">Cytoplasm</keyword>
<keyword id="KW-0472">Membrane</keyword>
<keyword id="KW-0547">Nucleotide-binding</keyword>
<keyword id="KW-0653">Protein transport</keyword>
<keyword id="KW-1278">Translocase</keyword>
<keyword id="KW-0811">Translocation</keyword>
<keyword id="KW-0813">Transport</keyword>
<reference key="1">
    <citation type="journal article" date="2007" name="Proc. Natl. Acad. Sci. U.S.A.">
        <title>Genome plasticity of BCG and impact on vaccine efficacy.</title>
        <authorList>
            <person name="Brosch R."/>
            <person name="Gordon S.V."/>
            <person name="Garnier T."/>
            <person name="Eiglmeier K."/>
            <person name="Frigui W."/>
            <person name="Valenti P."/>
            <person name="Dos Santos S."/>
            <person name="Duthoy S."/>
            <person name="Lacroix C."/>
            <person name="Garcia-Pelayo C."/>
            <person name="Inwald J.K."/>
            <person name="Golby P."/>
            <person name="Garcia J.N."/>
            <person name="Hewinson R.G."/>
            <person name="Behr M.A."/>
            <person name="Quail M.A."/>
            <person name="Churcher C."/>
            <person name="Barrell B.G."/>
            <person name="Parkhill J."/>
            <person name="Cole S.T."/>
        </authorList>
    </citation>
    <scope>NUCLEOTIDE SEQUENCE [LARGE SCALE GENOMIC DNA]</scope>
    <source>
        <strain>BCG / Pasteur 1173P2</strain>
    </source>
</reference>
<dbReference type="EC" id="7.4.2.8" evidence="1"/>
<dbReference type="EMBL" id="AM408590">
    <property type="protein sequence ID" value="CAL71843.1"/>
    <property type="molecule type" value="Genomic_DNA"/>
</dbReference>
<dbReference type="SMR" id="A1KJN3"/>
<dbReference type="KEGG" id="mbb:BCG_1856"/>
<dbReference type="HOGENOM" id="CLU_005314_3_2_11"/>
<dbReference type="Proteomes" id="UP000001472">
    <property type="component" value="Chromosome"/>
</dbReference>
<dbReference type="GO" id="GO:0031522">
    <property type="term" value="C:cell envelope Sec protein transport complex"/>
    <property type="evidence" value="ECO:0007669"/>
    <property type="project" value="TreeGrafter"/>
</dbReference>
<dbReference type="GO" id="GO:0005829">
    <property type="term" value="C:cytosol"/>
    <property type="evidence" value="ECO:0007669"/>
    <property type="project" value="TreeGrafter"/>
</dbReference>
<dbReference type="GO" id="GO:0005886">
    <property type="term" value="C:plasma membrane"/>
    <property type="evidence" value="ECO:0007669"/>
    <property type="project" value="UniProtKB-SubCell"/>
</dbReference>
<dbReference type="GO" id="GO:0005524">
    <property type="term" value="F:ATP binding"/>
    <property type="evidence" value="ECO:0007669"/>
    <property type="project" value="UniProtKB-UniRule"/>
</dbReference>
<dbReference type="GO" id="GO:0008564">
    <property type="term" value="F:protein-exporting ATPase activity"/>
    <property type="evidence" value="ECO:0007669"/>
    <property type="project" value="UniProtKB-EC"/>
</dbReference>
<dbReference type="GO" id="GO:0065002">
    <property type="term" value="P:intracellular protein transmembrane transport"/>
    <property type="evidence" value="ECO:0007669"/>
    <property type="project" value="UniProtKB-UniRule"/>
</dbReference>
<dbReference type="GO" id="GO:0017038">
    <property type="term" value="P:protein import"/>
    <property type="evidence" value="ECO:0007669"/>
    <property type="project" value="InterPro"/>
</dbReference>
<dbReference type="GO" id="GO:0006605">
    <property type="term" value="P:protein targeting"/>
    <property type="evidence" value="ECO:0007669"/>
    <property type="project" value="UniProtKB-UniRule"/>
</dbReference>
<dbReference type="GO" id="GO:0043952">
    <property type="term" value="P:protein transport by the Sec complex"/>
    <property type="evidence" value="ECO:0007669"/>
    <property type="project" value="TreeGrafter"/>
</dbReference>
<dbReference type="CDD" id="cd17928">
    <property type="entry name" value="DEXDc_SecA"/>
    <property type="match status" value="1"/>
</dbReference>
<dbReference type="CDD" id="cd18803">
    <property type="entry name" value="SF2_C_secA"/>
    <property type="match status" value="1"/>
</dbReference>
<dbReference type="FunFam" id="3.40.50.300:FF:000429">
    <property type="entry name" value="Preprotein translocase subunit SecA"/>
    <property type="match status" value="1"/>
</dbReference>
<dbReference type="FunFam" id="1.10.3060.10:FF:000010">
    <property type="entry name" value="Protein translocase subunit SecA 2"/>
    <property type="match status" value="1"/>
</dbReference>
<dbReference type="Gene3D" id="1.10.3060.10">
    <property type="entry name" value="Helical scaffold and wing domains of SecA"/>
    <property type="match status" value="1"/>
</dbReference>
<dbReference type="Gene3D" id="3.40.50.300">
    <property type="entry name" value="P-loop containing nucleotide triphosphate hydrolases"/>
    <property type="match status" value="3"/>
</dbReference>
<dbReference type="Gene3D" id="3.90.1440.10">
    <property type="entry name" value="SecA, preprotein cross-linking domain"/>
    <property type="match status" value="1"/>
</dbReference>
<dbReference type="HAMAP" id="MF_01382">
    <property type="entry name" value="SecA"/>
    <property type="match status" value="1"/>
</dbReference>
<dbReference type="InterPro" id="IPR014001">
    <property type="entry name" value="Helicase_ATP-bd"/>
</dbReference>
<dbReference type="InterPro" id="IPR001650">
    <property type="entry name" value="Helicase_C-like"/>
</dbReference>
<dbReference type="InterPro" id="IPR027417">
    <property type="entry name" value="P-loop_NTPase"/>
</dbReference>
<dbReference type="InterPro" id="IPR000185">
    <property type="entry name" value="SecA"/>
</dbReference>
<dbReference type="InterPro" id="IPR026389">
    <property type="entry name" value="SecA_Actinobact-type"/>
</dbReference>
<dbReference type="InterPro" id="IPR020937">
    <property type="entry name" value="SecA_CS"/>
</dbReference>
<dbReference type="InterPro" id="IPR011115">
    <property type="entry name" value="SecA_DEAD"/>
</dbReference>
<dbReference type="InterPro" id="IPR014018">
    <property type="entry name" value="SecA_motor_DEAD"/>
</dbReference>
<dbReference type="InterPro" id="IPR011130">
    <property type="entry name" value="SecA_preprotein_X-link_dom"/>
</dbReference>
<dbReference type="InterPro" id="IPR044722">
    <property type="entry name" value="SecA_SF2_C"/>
</dbReference>
<dbReference type="InterPro" id="IPR011116">
    <property type="entry name" value="SecA_Wing/Scaffold"/>
</dbReference>
<dbReference type="InterPro" id="IPR036266">
    <property type="entry name" value="SecA_Wing/Scaffold_sf"/>
</dbReference>
<dbReference type="InterPro" id="IPR036670">
    <property type="entry name" value="SecA_X-link_sf"/>
</dbReference>
<dbReference type="NCBIfam" id="TIGR04221">
    <property type="entry name" value="SecA2_Mycobac"/>
    <property type="match status" value="1"/>
</dbReference>
<dbReference type="PANTHER" id="PTHR30612:SF0">
    <property type="entry name" value="CHLOROPLAST PROTEIN-TRANSPORTING ATPASE"/>
    <property type="match status" value="1"/>
</dbReference>
<dbReference type="PANTHER" id="PTHR30612">
    <property type="entry name" value="SECA INNER MEMBRANE COMPONENT OF SEC PROTEIN SECRETION SYSTEM"/>
    <property type="match status" value="1"/>
</dbReference>
<dbReference type="Pfam" id="PF21090">
    <property type="entry name" value="P-loop_SecA"/>
    <property type="match status" value="1"/>
</dbReference>
<dbReference type="Pfam" id="PF07517">
    <property type="entry name" value="SecA_DEAD"/>
    <property type="match status" value="1"/>
</dbReference>
<dbReference type="Pfam" id="PF01043">
    <property type="entry name" value="SecA_PP_bind"/>
    <property type="match status" value="1"/>
</dbReference>
<dbReference type="Pfam" id="PF07516">
    <property type="entry name" value="SecA_SW"/>
    <property type="match status" value="1"/>
</dbReference>
<dbReference type="PRINTS" id="PR00906">
    <property type="entry name" value="SECA"/>
</dbReference>
<dbReference type="SMART" id="SM00957">
    <property type="entry name" value="SecA_DEAD"/>
    <property type="match status" value="1"/>
</dbReference>
<dbReference type="SMART" id="SM00958">
    <property type="entry name" value="SecA_PP_bind"/>
    <property type="match status" value="1"/>
</dbReference>
<dbReference type="SUPFAM" id="SSF81886">
    <property type="entry name" value="Helical scaffold and wing domains of SecA"/>
    <property type="match status" value="1"/>
</dbReference>
<dbReference type="SUPFAM" id="SSF52540">
    <property type="entry name" value="P-loop containing nucleoside triphosphate hydrolases"/>
    <property type="match status" value="2"/>
</dbReference>
<dbReference type="SUPFAM" id="SSF81767">
    <property type="entry name" value="Pre-protein crosslinking domain of SecA"/>
    <property type="match status" value="1"/>
</dbReference>
<dbReference type="PROSITE" id="PS01312">
    <property type="entry name" value="SECA"/>
    <property type="match status" value="1"/>
</dbReference>
<dbReference type="PROSITE" id="PS51196">
    <property type="entry name" value="SECA_MOTOR_DEAD"/>
    <property type="match status" value="1"/>
</dbReference>
<organism>
    <name type="scientific">Mycobacterium bovis (strain BCG / Pasteur 1173P2)</name>
    <dbReference type="NCBI Taxonomy" id="410289"/>
    <lineage>
        <taxon>Bacteria</taxon>
        <taxon>Bacillati</taxon>
        <taxon>Actinomycetota</taxon>
        <taxon>Actinomycetes</taxon>
        <taxon>Mycobacteriales</taxon>
        <taxon>Mycobacteriaceae</taxon>
        <taxon>Mycobacterium</taxon>
        <taxon>Mycobacterium tuberculosis complex</taxon>
    </lineage>
</organism>
<protein>
    <recommendedName>
        <fullName evidence="1">Protein translocase subunit SecA 2</fullName>
        <ecNumber evidence="1">7.4.2.8</ecNumber>
    </recommendedName>
</protein>
<sequence length="808" mass="88952">MNVHGCPRIAACRCTDTHPRGRPAFAYRWFVPKTTRAQPGRLSSRFWRLLGASTEKNRSRSLADVTASAEYDKEAADLSDEKLRKAAGLLNLDDLAESADIPQFLAIAREAAERRTGLRPFDVQLLGALRMLAGDVIEMATGEGKTLAGAIAAAGYALAGRHVHVVTINDYLARRDAEWMGPLLDAMGLTVGWITADSTPDERRTAYDRDVTYASVNEIGFDVLRDQLVTDVNDLVSPNPDVALIDEADSVLVDEALVPLVLAGTTHRETPRLEIIRLVAELVGDKDADEYFATDSDNRNVHLTEHGARKVEKALGGIDLYSEEHVGTTLTEVNVALHAHVLLQRDVHYIVRDDAVHLINASRGRIAQLQRWPDGLQAAVEAKEGIETTETGEVLDTITVQALINRYATVCGMTGTALAAGEQLRQFYQLGVSPIPPNKPNIREDEADRVYITTAAKNDGIVEHITEVHQRGQPVLVGTRDVAESEELHERLVRRGVPAVVLNAKNDAEEARVIAEAGKYGAVTVSTQMAGRGTDIRLGGSDEADHDRVAELGGLHVVGTGRHHTERLDNQLRGRAGRQGDPGSSVFFSSWEDDVVAANLDHNKLPMATDENGRIVSPRTGSLLDHAQRVAEGRLLDVHANTWRYNQLIAQQRAIIVERRNTLLRTVTAREELAELAPKRYEELSDKVSEERLETICRQIMLYHLDRGWADHLAYLADIRESIHLRALGRQNPLDEFHRMAVDAFASLAADAIEAAQQTFETANVLDHEPGLDLSKLARPTSTWTYMVNDNPLSDDTLSALSLPGVFR</sequence>
<gene>
    <name evidence="1" type="primary">secA2</name>
    <name type="ordered locus">BCG_1856</name>
</gene>
<accession>A1KJN3</accession>
<proteinExistence type="inferred from homology"/>
<evidence type="ECO:0000255" key="1">
    <source>
        <dbReference type="HAMAP-Rule" id="MF_01382"/>
    </source>
</evidence>